<sequence>MSDIEAQRIAARIDTVLDILVAGDYHSAINNLEILRAELLDQVKDGISPSQAPGSPWEI</sequence>
<proteinExistence type="inferred from homology"/>
<comment type="similarity">
    <text evidence="1">Belongs to the UPF0509 family.</text>
</comment>
<reference key="1">
    <citation type="journal article" date="2011" name="J. Bacteriol.">
        <title>Comparative genomics of 28 Salmonella enterica isolates: evidence for CRISPR-mediated adaptive sublineage evolution.</title>
        <authorList>
            <person name="Fricke W.F."/>
            <person name="Mammel M.K."/>
            <person name="McDermott P.F."/>
            <person name="Tartera C."/>
            <person name="White D.G."/>
            <person name="Leclerc J.E."/>
            <person name="Ravel J."/>
            <person name="Cebula T.A."/>
        </authorList>
    </citation>
    <scope>NUCLEOTIDE SEQUENCE [LARGE SCALE GENOMIC DNA]</scope>
    <source>
        <strain>SL476</strain>
    </source>
</reference>
<accession>B4TJI2</accession>
<dbReference type="EMBL" id="CP001120">
    <property type="protein sequence ID" value="ACF69723.1"/>
    <property type="molecule type" value="Genomic_DNA"/>
</dbReference>
<dbReference type="RefSeq" id="WP_001279854.1">
    <property type="nucleotide sequence ID" value="NC_011083.1"/>
</dbReference>
<dbReference type="KEGG" id="seh:SeHA_C1889"/>
<dbReference type="HOGENOM" id="CLU_180697_1_0_6"/>
<dbReference type="Proteomes" id="UP000001866">
    <property type="component" value="Chromosome"/>
</dbReference>
<dbReference type="HAMAP" id="MF_01641">
    <property type="entry name" value="UPF0509"/>
    <property type="match status" value="1"/>
</dbReference>
<dbReference type="InterPro" id="IPR020887">
    <property type="entry name" value="UPF0509"/>
</dbReference>
<dbReference type="NCBIfam" id="NF010179">
    <property type="entry name" value="PRK13658.1"/>
    <property type="match status" value="1"/>
</dbReference>
<dbReference type="Pfam" id="PF23675">
    <property type="entry name" value="YciZ"/>
    <property type="match status" value="1"/>
</dbReference>
<feature type="chain" id="PRO_1000186855" description="UPF0509 protein YciZ">
    <location>
        <begin position="1"/>
        <end position="59"/>
    </location>
</feature>
<name>YCIZ_SALHS</name>
<protein>
    <recommendedName>
        <fullName evidence="1">UPF0509 protein YciZ</fullName>
    </recommendedName>
</protein>
<organism>
    <name type="scientific">Salmonella heidelberg (strain SL476)</name>
    <dbReference type="NCBI Taxonomy" id="454169"/>
    <lineage>
        <taxon>Bacteria</taxon>
        <taxon>Pseudomonadati</taxon>
        <taxon>Pseudomonadota</taxon>
        <taxon>Gammaproteobacteria</taxon>
        <taxon>Enterobacterales</taxon>
        <taxon>Enterobacteriaceae</taxon>
        <taxon>Salmonella</taxon>
    </lineage>
</organism>
<evidence type="ECO:0000255" key="1">
    <source>
        <dbReference type="HAMAP-Rule" id="MF_01641"/>
    </source>
</evidence>
<gene>
    <name evidence="1" type="primary">yciZ</name>
    <name type="ordered locus">SeHA_C1889</name>
</gene>